<keyword id="KW-0002">3D-structure</keyword>
<keyword id="KW-0963">Cytoplasm</keyword>
<keyword id="KW-0903">Direct protein sequencing</keyword>
<keyword id="KW-1185">Reference proteome</keyword>
<keyword id="KW-0687">Ribonucleoprotein</keyword>
<keyword id="KW-0689">Ribosomal protein</keyword>
<dbReference type="EMBL" id="X17204">
    <property type="protein sequence ID" value="CAA35073.1"/>
    <property type="molecule type" value="Genomic_DNA"/>
</dbReference>
<dbReference type="EMBL" id="X56836">
    <property type="protein sequence ID" value="CAA40166.1"/>
    <property type="molecule type" value="Genomic_DNA"/>
</dbReference>
<dbReference type="EMBL" id="U17361">
    <property type="protein sequence ID" value="AAA64574.1"/>
    <property type="molecule type" value="Genomic_DNA"/>
</dbReference>
<dbReference type="EMBL" id="U11583">
    <property type="protein sequence ID" value="AAB65045.1"/>
    <property type="molecule type" value="Genomic_DNA"/>
</dbReference>
<dbReference type="EMBL" id="BK006934">
    <property type="protein sequence ID" value="DAA06652.1"/>
    <property type="molecule type" value="Genomic_DNA"/>
</dbReference>
<dbReference type="PIR" id="S16811">
    <property type="entry name" value="R5BY7A"/>
</dbReference>
<dbReference type="RefSeq" id="NP_011830.1">
    <property type="nucleotide sequence ID" value="NM_001179113.1"/>
</dbReference>
<dbReference type="PDB" id="3J6X">
    <property type="method" value="EM"/>
    <property type="resolution" value="6.10 A"/>
    <property type="chains" value="L8=1-256"/>
</dbReference>
<dbReference type="PDB" id="3J6Y">
    <property type="method" value="EM"/>
    <property type="resolution" value="6.10 A"/>
    <property type="chains" value="L8=1-256"/>
</dbReference>
<dbReference type="PDB" id="3J77">
    <property type="method" value="EM"/>
    <property type="resolution" value="6.20 A"/>
    <property type="chains" value="L8=1-256"/>
</dbReference>
<dbReference type="PDB" id="3J78">
    <property type="method" value="EM"/>
    <property type="resolution" value="6.30 A"/>
    <property type="chains" value="L8=1-256"/>
</dbReference>
<dbReference type="PDB" id="3JCT">
    <property type="method" value="EM"/>
    <property type="resolution" value="3.08 A"/>
    <property type="chains" value="G=1-256"/>
</dbReference>
<dbReference type="PDB" id="4U3M">
    <property type="method" value="X-ray"/>
    <property type="resolution" value="3.00 A"/>
    <property type="chains" value="L8/l8=2-256"/>
</dbReference>
<dbReference type="PDB" id="4U3N">
    <property type="method" value="X-ray"/>
    <property type="resolution" value="3.20 A"/>
    <property type="chains" value="L8/l8=2-256"/>
</dbReference>
<dbReference type="PDB" id="4U3U">
    <property type="method" value="X-ray"/>
    <property type="resolution" value="2.90 A"/>
    <property type="chains" value="L8/l8=2-256"/>
</dbReference>
<dbReference type="PDB" id="4U4N">
    <property type="method" value="X-ray"/>
    <property type="resolution" value="3.10 A"/>
    <property type="chains" value="L8/l8=2-256"/>
</dbReference>
<dbReference type="PDB" id="4U4O">
    <property type="method" value="X-ray"/>
    <property type="resolution" value="3.60 A"/>
    <property type="chains" value="L8/l8=2-256"/>
</dbReference>
<dbReference type="PDB" id="4U4Q">
    <property type="method" value="X-ray"/>
    <property type="resolution" value="3.00 A"/>
    <property type="chains" value="L8/l8=2-256"/>
</dbReference>
<dbReference type="PDB" id="4U4R">
    <property type="method" value="X-ray"/>
    <property type="resolution" value="2.80 A"/>
    <property type="chains" value="L8/l8=2-256"/>
</dbReference>
<dbReference type="PDB" id="4U4U">
    <property type="method" value="X-ray"/>
    <property type="resolution" value="3.00 A"/>
    <property type="chains" value="L8/l8=2-256"/>
</dbReference>
<dbReference type="PDB" id="4U4Y">
    <property type="method" value="X-ray"/>
    <property type="resolution" value="3.20 A"/>
    <property type="chains" value="L8/l8=2-256"/>
</dbReference>
<dbReference type="PDB" id="4U4Z">
    <property type="method" value="X-ray"/>
    <property type="resolution" value="3.10 A"/>
    <property type="chains" value="L8/l8=2-256"/>
</dbReference>
<dbReference type="PDB" id="4U50">
    <property type="method" value="X-ray"/>
    <property type="resolution" value="3.20 A"/>
    <property type="chains" value="L8/l8=2-256"/>
</dbReference>
<dbReference type="PDB" id="4U51">
    <property type="method" value="X-ray"/>
    <property type="resolution" value="3.20 A"/>
    <property type="chains" value="L8/l8=2-256"/>
</dbReference>
<dbReference type="PDB" id="4U52">
    <property type="method" value="X-ray"/>
    <property type="resolution" value="3.00 A"/>
    <property type="chains" value="L8/l8=2-256"/>
</dbReference>
<dbReference type="PDB" id="4U53">
    <property type="method" value="X-ray"/>
    <property type="resolution" value="3.30 A"/>
    <property type="chains" value="L8/l8=2-256"/>
</dbReference>
<dbReference type="PDB" id="4U55">
    <property type="method" value="X-ray"/>
    <property type="resolution" value="3.20 A"/>
    <property type="chains" value="L8/l8=2-256"/>
</dbReference>
<dbReference type="PDB" id="4U56">
    <property type="method" value="X-ray"/>
    <property type="resolution" value="3.45 A"/>
    <property type="chains" value="L8/l8=2-256"/>
</dbReference>
<dbReference type="PDB" id="4U6F">
    <property type="method" value="X-ray"/>
    <property type="resolution" value="3.10 A"/>
    <property type="chains" value="L8/l8=2-256"/>
</dbReference>
<dbReference type="PDB" id="4V4B">
    <property type="method" value="EM"/>
    <property type="resolution" value="11.70 A"/>
    <property type="chains" value="BG=102-220"/>
</dbReference>
<dbReference type="PDB" id="4V5Z">
    <property type="method" value="EM"/>
    <property type="resolution" value="8.70 A"/>
    <property type="chains" value="Bf=2-256"/>
</dbReference>
<dbReference type="PDB" id="4V6I">
    <property type="method" value="EM"/>
    <property type="resolution" value="8.80 A"/>
    <property type="chains" value="BH=1-256"/>
</dbReference>
<dbReference type="PDB" id="4V7F">
    <property type="method" value="EM"/>
    <property type="resolution" value="8.70 A"/>
    <property type="chains" value="H=1-256"/>
</dbReference>
<dbReference type="PDB" id="4V7R">
    <property type="method" value="X-ray"/>
    <property type="resolution" value="4.00 A"/>
    <property type="chains" value="BH/DH=1-256"/>
</dbReference>
<dbReference type="PDB" id="4V88">
    <property type="method" value="X-ray"/>
    <property type="resolution" value="3.00 A"/>
    <property type="chains" value="BG/DG=1-256"/>
</dbReference>
<dbReference type="PDB" id="4V8T">
    <property type="method" value="EM"/>
    <property type="resolution" value="8.10 A"/>
    <property type="chains" value="G=1-256"/>
</dbReference>
<dbReference type="PDB" id="4V8Y">
    <property type="method" value="EM"/>
    <property type="resolution" value="4.30 A"/>
    <property type="chains" value="BG=2-256"/>
</dbReference>
<dbReference type="PDB" id="4V8Z">
    <property type="method" value="EM"/>
    <property type="resolution" value="6.60 A"/>
    <property type="chains" value="BG=2-256"/>
</dbReference>
<dbReference type="PDB" id="4V91">
    <property type="method" value="EM"/>
    <property type="resolution" value="3.70 A"/>
    <property type="chains" value="G=1-256"/>
</dbReference>
<dbReference type="PDB" id="5APN">
    <property type="method" value="EM"/>
    <property type="resolution" value="3.91 A"/>
    <property type="chains" value="G=1-256"/>
</dbReference>
<dbReference type="PDB" id="5APO">
    <property type="method" value="EM"/>
    <property type="resolution" value="3.41 A"/>
    <property type="chains" value="G=1-256"/>
</dbReference>
<dbReference type="PDB" id="5DAT">
    <property type="method" value="X-ray"/>
    <property type="resolution" value="3.15 A"/>
    <property type="chains" value="L8/l8=2-256"/>
</dbReference>
<dbReference type="PDB" id="5DC3">
    <property type="method" value="X-ray"/>
    <property type="resolution" value="3.25 A"/>
    <property type="chains" value="L8/l8=2-256"/>
</dbReference>
<dbReference type="PDB" id="5DGE">
    <property type="method" value="X-ray"/>
    <property type="resolution" value="3.45 A"/>
    <property type="chains" value="L8/l8=2-256"/>
</dbReference>
<dbReference type="PDB" id="5DGF">
    <property type="method" value="X-ray"/>
    <property type="resolution" value="3.30 A"/>
    <property type="chains" value="L8/l8=2-256"/>
</dbReference>
<dbReference type="PDB" id="5FCI">
    <property type="method" value="X-ray"/>
    <property type="resolution" value="3.40 A"/>
    <property type="chains" value="L8/l8=2-256"/>
</dbReference>
<dbReference type="PDB" id="5FCJ">
    <property type="method" value="X-ray"/>
    <property type="resolution" value="3.10 A"/>
    <property type="chains" value="L8/l8=2-256"/>
</dbReference>
<dbReference type="PDB" id="5GAK">
    <property type="method" value="EM"/>
    <property type="resolution" value="3.88 A"/>
    <property type="chains" value="K=1-256"/>
</dbReference>
<dbReference type="PDB" id="5H4P">
    <property type="method" value="EM"/>
    <property type="resolution" value="3.07 A"/>
    <property type="chains" value="G=1-256"/>
</dbReference>
<dbReference type="PDB" id="5I4L">
    <property type="method" value="X-ray"/>
    <property type="resolution" value="3.10 A"/>
    <property type="chains" value="L8=24-256, l8=24-254"/>
</dbReference>
<dbReference type="PDB" id="5JCS">
    <property type="method" value="EM"/>
    <property type="resolution" value="9.50 A"/>
    <property type="chains" value="G=1-256"/>
</dbReference>
<dbReference type="PDB" id="5JUO">
    <property type="method" value="EM"/>
    <property type="resolution" value="4.00 A"/>
    <property type="chains" value="L=1-256"/>
</dbReference>
<dbReference type="PDB" id="5JUP">
    <property type="method" value="EM"/>
    <property type="resolution" value="3.50 A"/>
    <property type="chains" value="L=1-256"/>
</dbReference>
<dbReference type="PDB" id="5JUS">
    <property type="method" value="EM"/>
    <property type="resolution" value="4.20 A"/>
    <property type="chains" value="L=1-256"/>
</dbReference>
<dbReference type="PDB" id="5JUT">
    <property type="method" value="EM"/>
    <property type="resolution" value="4.00 A"/>
    <property type="chains" value="L=1-256"/>
</dbReference>
<dbReference type="PDB" id="5JUU">
    <property type="method" value="EM"/>
    <property type="resolution" value="4.00 A"/>
    <property type="chains" value="L=1-256"/>
</dbReference>
<dbReference type="PDB" id="5LYB">
    <property type="method" value="X-ray"/>
    <property type="resolution" value="3.25 A"/>
    <property type="chains" value="L8=24-256, l8=24-248"/>
</dbReference>
<dbReference type="PDB" id="5M1J">
    <property type="method" value="EM"/>
    <property type="resolution" value="3.30 A"/>
    <property type="chains" value="G5=24-256"/>
</dbReference>
<dbReference type="PDB" id="5MC6">
    <property type="method" value="EM"/>
    <property type="resolution" value="3.80 A"/>
    <property type="chains" value="AA=1-256"/>
</dbReference>
<dbReference type="PDB" id="5MEI">
    <property type="method" value="X-ray"/>
    <property type="resolution" value="3.50 A"/>
    <property type="chains" value="CJ/p=24-256"/>
</dbReference>
<dbReference type="PDB" id="5NDG">
    <property type="method" value="X-ray"/>
    <property type="resolution" value="3.70 A"/>
    <property type="chains" value="L8/l8=24-256"/>
</dbReference>
<dbReference type="PDB" id="5NDV">
    <property type="method" value="X-ray"/>
    <property type="resolution" value="3.30 A"/>
    <property type="chains" value="L8/l8=24-254"/>
</dbReference>
<dbReference type="PDB" id="5NDW">
    <property type="method" value="X-ray"/>
    <property type="resolution" value="3.70 A"/>
    <property type="chains" value="L8/l8=24-256"/>
</dbReference>
<dbReference type="PDB" id="5OBM">
    <property type="method" value="X-ray"/>
    <property type="resolution" value="3.40 A"/>
    <property type="chains" value="L8/l8=24-256"/>
</dbReference>
<dbReference type="PDB" id="5ON6">
    <property type="method" value="X-ray"/>
    <property type="resolution" value="3.10 A"/>
    <property type="chains" value="CJ/p=24-256"/>
</dbReference>
<dbReference type="PDB" id="5T62">
    <property type="method" value="EM"/>
    <property type="resolution" value="3.30 A"/>
    <property type="chains" value="J=1-256"/>
</dbReference>
<dbReference type="PDB" id="5T6R">
    <property type="method" value="EM"/>
    <property type="resolution" value="4.50 A"/>
    <property type="chains" value="J=1-256"/>
</dbReference>
<dbReference type="PDB" id="5TBW">
    <property type="method" value="X-ray"/>
    <property type="resolution" value="3.00 A"/>
    <property type="chains" value="CJ/p=24-256"/>
</dbReference>
<dbReference type="PDB" id="5TGA">
    <property type="method" value="X-ray"/>
    <property type="resolution" value="3.30 A"/>
    <property type="chains" value="L8/l8=24-256"/>
</dbReference>
<dbReference type="PDB" id="5TGM">
    <property type="method" value="X-ray"/>
    <property type="resolution" value="3.50 A"/>
    <property type="chains" value="L8=24-256, l8=24-248"/>
</dbReference>
<dbReference type="PDB" id="5Z3G">
    <property type="method" value="EM"/>
    <property type="resolution" value="3.65 A"/>
    <property type="chains" value="K=1-256"/>
</dbReference>
<dbReference type="PDB" id="6C0F">
    <property type="method" value="EM"/>
    <property type="resolution" value="3.70 A"/>
    <property type="chains" value="G=1-256"/>
</dbReference>
<dbReference type="PDB" id="6CB1">
    <property type="method" value="EM"/>
    <property type="resolution" value="4.60 A"/>
    <property type="chains" value="G=1-256"/>
</dbReference>
<dbReference type="PDB" id="6ELZ">
    <property type="method" value="EM"/>
    <property type="resolution" value="3.30 A"/>
    <property type="chains" value="G=1-256"/>
</dbReference>
<dbReference type="PDB" id="6EM1">
    <property type="method" value="EM"/>
    <property type="resolution" value="3.60 A"/>
    <property type="chains" value="G=1-256"/>
</dbReference>
<dbReference type="PDB" id="6EM3">
    <property type="method" value="EM"/>
    <property type="resolution" value="3.20 A"/>
    <property type="chains" value="G=1-256"/>
</dbReference>
<dbReference type="PDB" id="6EM4">
    <property type="method" value="EM"/>
    <property type="resolution" value="4.10 A"/>
    <property type="chains" value="G=1-256"/>
</dbReference>
<dbReference type="PDB" id="6EM5">
    <property type="method" value="EM"/>
    <property type="resolution" value="4.30 A"/>
    <property type="chains" value="G=1-256"/>
</dbReference>
<dbReference type="PDB" id="6FT6">
    <property type="method" value="EM"/>
    <property type="resolution" value="3.90 A"/>
    <property type="chains" value="G=1-256"/>
</dbReference>
<dbReference type="PDB" id="6GQ1">
    <property type="method" value="EM"/>
    <property type="resolution" value="4.40 A"/>
    <property type="chains" value="G=24-256"/>
</dbReference>
<dbReference type="PDB" id="6GQB">
    <property type="method" value="EM"/>
    <property type="resolution" value="3.90 A"/>
    <property type="chains" value="G=24-256"/>
</dbReference>
<dbReference type="PDB" id="6GQV">
    <property type="method" value="EM"/>
    <property type="resolution" value="4.00 A"/>
    <property type="chains" value="G=24-256"/>
</dbReference>
<dbReference type="PDB" id="6HD7">
    <property type="method" value="EM"/>
    <property type="resolution" value="3.40 A"/>
    <property type="chains" value="K=1-256"/>
</dbReference>
<dbReference type="PDB" id="6HHQ">
    <property type="method" value="X-ray"/>
    <property type="resolution" value="3.10 A"/>
    <property type="chains" value="CJ/p=1-256"/>
</dbReference>
<dbReference type="PDB" id="6I7O">
    <property type="method" value="EM"/>
    <property type="resolution" value="5.30 A"/>
    <property type="chains" value="AA/XA=24-254"/>
</dbReference>
<dbReference type="PDB" id="6M62">
    <property type="method" value="EM"/>
    <property type="resolution" value="3.20 A"/>
    <property type="chains" value="G=1-256"/>
</dbReference>
<dbReference type="PDB" id="6N8J">
    <property type="method" value="EM"/>
    <property type="resolution" value="3.50 A"/>
    <property type="chains" value="G=1-256"/>
</dbReference>
<dbReference type="PDB" id="6N8K">
    <property type="method" value="EM"/>
    <property type="resolution" value="3.60 A"/>
    <property type="chains" value="G=1-256"/>
</dbReference>
<dbReference type="PDB" id="6N8L">
    <property type="method" value="EM"/>
    <property type="resolution" value="3.60 A"/>
    <property type="chains" value="G=1-256"/>
</dbReference>
<dbReference type="PDB" id="6N8M">
    <property type="method" value="EM"/>
    <property type="resolution" value="3.50 A"/>
    <property type="chains" value="J=1-256"/>
</dbReference>
<dbReference type="PDB" id="6N8N">
    <property type="method" value="EM"/>
    <property type="resolution" value="3.80 A"/>
    <property type="chains" value="J=1-256"/>
</dbReference>
<dbReference type="PDB" id="6N8O">
    <property type="method" value="EM"/>
    <property type="resolution" value="3.50 A"/>
    <property type="chains" value="J=1-256"/>
</dbReference>
<dbReference type="PDB" id="6OIG">
    <property type="method" value="EM"/>
    <property type="resolution" value="3.80 A"/>
    <property type="chains" value="G=24-256"/>
</dbReference>
<dbReference type="PDB" id="6Q8Y">
    <property type="method" value="EM"/>
    <property type="resolution" value="3.10 A"/>
    <property type="chains" value="AA=24-256"/>
</dbReference>
<dbReference type="PDB" id="6QIK">
    <property type="method" value="EM"/>
    <property type="resolution" value="3.10 A"/>
    <property type="chains" value="H=1-256"/>
</dbReference>
<dbReference type="PDB" id="6QT0">
    <property type="method" value="EM"/>
    <property type="resolution" value="3.40 A"/>
    <property type="chains" value="H=1-256"/>
</dbReference>
<dbReference type="PDB" id="6QTZ">
    <property type="method" value="EM"/>
    <property type="resolution" value="3.50 A"/>
    <property type="chains" value="H=1-256"/>
</dbReference>
<dbReference type="PDB" id="6R84">
    <property type="method" value="EM"/>
    <property type="resolution" value="3.60 A"/>
    <property type="chains" value="K=24-256"/>
</dbReference>
<dbReference type="PDB" id="6R86">
    <property type="method" value="EM"/>
    <property type="resolution" value="3.40 A"/>
    <property type="chains" value="K=24-256"/>
</dbReference>
<dbReference type="PDB" id="6R87">
    <property type="method" value="EM"/>
    <property type="resolution" value="3.40 A"/>
    <property type="chains" value="K=24-256"/>
</dbReference>
<dbReference type="PDB" id="6RI5">
    <property type="method" value="EM"/>
    <property type="resolution" value="3.30 A"/>
    <property type="chains" value="H=1-256"/>
</dbReference>
<dbReference type="PDB" id="6RZZ">
    <property type="method" value="EM"/>
    <property type="resolution" value="3.20 A"/>
    <property type="chains" value="H=1-256"/>
</dbReference>
<dbReference type="PDB" id="6S05">
    <property type="method" value="EM"/>
    <property type="resolution" value="3.90 A"/>
    <property type="chains" value="H=1-256"/>
</dbReference>
<dbReference type="PDB" id="6S47">
    <property type="method" value="EM"/>
    <property type="resolution" value="3.28 A"/>
    <property type="chains" value="AJ=24-256"/>
</dbReference>
<dbReference type="PDB" id="6SNT">
    <property type="method" value="EM"/>
    <property type="resolution" value="2.80 A"/>
    <property type="chains" value="n=1-256"/>
</dbReference>
<dbReference type="PDB" id="6SV4">
    <property type="method" value="EM"/>
    <property type="resolution" value="3.30 A"/>
    <property type="chains" value="AA/XA/zA=1-256"/>
</dbReference>
<dbReference type="PDB" id="6T4Q">
    <property type="method" value="EM"/>
    <property type="resolution" value="2.60 A"/>
    <property type="chains" value="LG=24-256"/>
</dbReference>
<dbReference type="PDB" id="6T7I">
    <property type="method" value="EM"/>
    <property type="resolution" value="3.20 A"/>
    <property type="chains" value="LG=1-256"/>
</dbReference>
<dbReference type="PDB" id="6T7T">
    <property type="method" value="EM"/>
    <property type="resolution" value="3.10 A"/>
    <property type="chains" value="LG=1-256"/>
</dbReference>
<dbReference type="PDB" id="6T83">
    <property type="method" value="EM"/>
    <property type="resolution" value="4.00 A"/>
    <property type="chains" value="Gy/Ja=1-256"/>
</dbReference>
<dbReference type="PDB" id="6TB3">
    <property type="method" value="EM"/>
    <property type="resolution" value="2.80 A"/>
    <property type="chains" value="AA=24-256"/>
</dbReference>
<dbReference type="PDB" id="6TNU">
    <property type="method" value="EM"/>
    <property type="resolution" value="3.10 A"/>
    <property type="chains" value="AA=24-256"/>
</dbReference>
<dbReference type="PDB" id="6WOO">
    <property type="method" value="EM"/>
    <property type="resolution" value="2.90 A"/>
    <property type="chains" value="G=24-256"/>
</dbReference>
<dbReference type="PDB" id="6YLG">
    <property type="method" value="EM"/>
    <property type="resolution" value="3.00 A"/>
    <property type="chains" value="G=1-256"/>
</dbReference>
<dbReference type="PDB" id="6YLH">
    <property type="method" value="EM"/>
    <property type="resolution" value="3.10 A"/>
    <property type="chains" value="G=1-256"/>
</dbReference>
<dbReference type="PDB" id="6YLX">
    <property type="method" value="EM"/>
    <property type="resolution" value="3.90 A"/>
    <property type="chains" value="G=1-256"/>
</dbReference>
<dbReference type="PDB" id="6YLY">
    <property type="method" value="EM"/>
    <property type="resolution" value="3.80 A"/>
    <property type="chains" value="G=1-256"/>
</dbReference>
<dbReference type="PDB" id="6Z6J">
    <property type="method" value="EM"/>
    <property type="resolution" value="3.40 A"/>
    <property type="chains" value="LG=1-256"/>
</dbReference>
<dbReference type="PDB" id="6Z6K">
    <property type="method" value="EM"/>
    <property type="resolution" value="3.40 A"/>
    <property type="chains" value="LG=1-256"/>
</dbReference>
<dbReference type="PDB" id="7AZY">
    <property type="method" value="EM"/>
    <property type="resolution" value="2.88 A"/>
    <property type="chains" value="b=1-256"/>
</dbReference>
<dbReference type="PDB" id="7B7D">
    <property type="method" value="EM"/>
    <property type="resolution" value="3.30 A"/>
    <property type="chains" value="LJ=24-256"/>
</dbReference>
<dbReference type="PDB" id="7BT6">
    <property type="method" value="EM"/>
    <property type="resolution" value="3.12 A"/>
    <property type="chains" value="G=1-256"/>
</dbReference>
<dbReference type="PDB" id="7BTB">
    <property type="method" value="EM"/>
    <property type="resolution" value="3.22 A"/>
    <property type="chains" value="G=1-256"/>
</dbReference>
<dbReference type="PDB" id="7MPI">
    <property type="method" value="EM"/>
    <property type="resolution" value="3.05 A"/>
    <property type="chains" value="AG=24-253"/>
</dbReference>
<dbReference type="PDB" id="7MPJ">
    <property type="method" value="EM"/>
    <property type="resolution" value="2.70 A"/>
    <property type="chains" value="AG=24-253"/>
</dbReference>
<dbReference type="PDB" id="7N8B">
    <property type="method" value="EM"/>
    <property type="resolution" value="3.05 A"/>
    <property type="chains" value="AG=24-253"/>
</dbReference>
<dbReference type="PDB" id="7NAC">
    <property type="method" value="EM"/>
    <property type="resolution" value="3.04 A"/>
    <property type="chains" value="G=1-256"/>
</dbReference>
<dbReference type="PDB" id="7NAD">
    <property type="method" value="EM"/>
    <property type="resolution" value="3.04 A"/>
    <property type="chains" value="G=1-256"/>
</dbReference>
<dbReference type="PDB" id="7NRC">
    <property type="method" value="EM"/>
    <property type="resolution" value="3.90 A"/>
    <property type="chains" value="LJ=24-256"/>
</dbReference>
<dbReference type="PDB" id="7NRD">
    <property type="method" value="EM"/>
    <property type="resolution" value="4.36 A"/>
    <property type="chains" value="LJ=24-256"/>
</dbReference>
<dbReference type="PDB" id="7OF1">
    <property type="method" value="EM"/>
    <property type="resolution" value="3.10 A"/>
    <property type="chains" value="G=1-256"/>
</dbReference>
<dbReference type="PDB" id="7OH3">
    <property type="method" value="EM"/>
    <property type="resolution" value="3.40 A"/>
    <property type="chains" value="G=1-256"/>
</dbReference>
<dbReference type="PDB" id="7OHP">
    <property type="method" value="EM"/>
    <property type="resolution" value="3.90 A"/>
    <property type="chains" value="G=1-256"/>
</dbReference>
<dbReference type="PDB" id="7OHQ">
    <property type="method" value="EM"/>
    <property type="resolution" value="3.10 A"/>
    <property type="chains" value="G=1-256"/>
</dbReference>
<dbReference type="PDB" id="7OHR">
    <property type="method" value="EM"/>
    <property type="resolution" value="4.72 A"/>
    <property type="chains" value="G=1-256"/>
</dbReference>
<dbReference type="PDB" id="7OHS">
    <property type="method" value="EM"/>
    <property type="resolution" value="4.38 A"/>
    <property type="chains" value="G=1-256"/>
</dbReference>
<dbReference type="PDB" id="7OHU">
    <property type="method" value="EM"/>
    <property type="resolution" value="3.70 A"/>
    <property type="chains" value="G=1-256"/>
</dbReference>
<dbReference type="PDB" id="7OHV">
    <property type="method" value="EM"/>
    <property type="resolution" value="3.90 A"/>
    <property type="chains" value="G=1-256"/>
</dbReference>
<dbReference type="PDB" id="7OHW">
    <property type="method" value="EM"/>
    <property type="resolution" value="3.50 A"/>
    <property type="chains" value="G=1-256"/>
</dbReference>
<dbReference type="PDB" id="7OHX">
    <property type="method" value="EM"/>
    <property type="resolution" value="3.30 A"/>
    <property type="chains" value="G=1-256"/>
</dbReference>
<dbReference type="PDB" id="7OHY">
    <property type="method" value="EM"/>
    <property type="resolution" value="3.90 A"/>
    <property type="chains" value="G=1-256"/>
</dbReference>
<dbReference type="PDB" id="7OSA">
    <property type="method" value="X-ray"/>
    <property type="resolution" value="3.00 A"/>
    <property type="chains" value="eL8=1-256"/>
</dbReference>
<dbReference type="PDB" id="7OSM">
    <property type="method" value="X-ray"/>
    <property type="resolution" value="3.00 A"/>
    <property type="chains" value="eL8=1-256"/>
</dbReference>
<dbReference type="PDB" id="7R6K">
    <property type="method" value="EM"/>
    <property type="resolution" value="3.17 A"/>
    <property type="chains" value="G=1-256"/>
</dbReference>
<dbReference type="PDB" id="7R6Q">
    <property type="method" value="EM"/>
    <property type="resolution" value="2.98 A"/>
    <property type="chains" value="G=1-256"/>
</dbReference>
<dbReference type="PDB" id="7R72">
    <property type="method" value="EM"/>
    <property type="resolution" value="3.07 A"/>
    <property type="chains" value="G=1-256"/>
</dbReference>
<dbReference type="PDB" id="7R7A">
    <property type="method" value="EM"/>
    <property type="resolution" value="3.04 A"/>
    <property type="chains" value="G=1-256"/>
</dbReference>
<dbReference type="PDB" id="7RR5">
    <property type="method" value="EM"/>
    <property type="resolution" value="3.23 A"/>
    <property type="chains" value="LG=1-256"/>
</dbReference>
<dbReference type="PDB" id="7TOO">
    <property type="method" value="EM"/>
    <property type="resolution" value="2.70 A"/>
    <property type="chains" value="AL08=1-256"/>
</dbReference>
<dbReference type="PDB" id="7TOP">
    <property type="method" value="EM"/>
    <property type="resolution" value="2.40 A"/>
    <property type="chains" value="AL08=1-256"/>
</dbReference>
<dbReference type="PDB" id="7U0H">
    <property type="method" value="EM"/>
    <property type="resolution" value="2.76 A"/>
    <property type="chains" value="G=1-256"/>
</dbReference>
<dbReference type="PDB" id="7UG6">
    <property type="method" value="EM"/>
    <property type="resolution" value="2.90 A"/>
    <property type="chains" value="G=1-256"/>
</dbReference>
<dbReference type="PDB" id="7UOO">
    <property type="method" value="EM"/>
    <property type="resolution" value="2.34 A"/>
    <property type="chains" value="G=1-256"/>
</dbReference>
<dbReference type="PDB" id="7UQB">
    <property type="method" value="EM"/>
    <property type="resolution" value="2.43 A"/>
    <property type="chains" value="G=1-256"/>
</dbReference>
<dbReference type="PDB" id="7UQZ">
    <property type="method" value="EM"/>
    <property type="resolution" value="2.44 A"/>
    <property type="chains" value="G=1-256"/>
</dbReference>
<dbReference type="PDB" id="7V08">
    <property type="method" value="EM"/>
    <property type="resolution" value="2.36 A"/>
    <property type="chains" value="G=1-256"/>
</dbReference>
<dbReference type="PDB" id="7Z34">
    <property type="method" value="EM"/>
    <property type="resolution" value="3.80 A"/>
    <property type="chains" value="G=1-256"/>
</dbReference>
<dbReference type="PDB" id="7ZPQ">
    <property type="method" value="EM"/>
    <property type="resolution" value="3.47 A"/>
    <property type="chains" value="BG=24-256"/>
</dbReference>
<dbReference type="PDB" id="7ZRS">
    <property type="method" value="EM"/>
    <property type="resolution" value="4.80 A"/>
    <property type="chains" value="BG=24-256"/>
</dbReference>
<dbReference type="PDB" id="7ZS5">
    <property type="method" value="EM"/>
    <property type="resolution" value="3.20 A"/>
    <property type="chains" value="BI=24-256"/>
</dbReference>
<dbReference type="PDB" id="7ZUW">
    <property type="method" value="EM"/>
    <property type="resolution" value="4.30 A"/>
    <property type="chains" value="BG=24-256"/>
</dbReference>
<dbReference type="PDB" id="7ZUX">
    <property type="method" value="EM"/>
    <property type="resolution" value="2.50 A"/>
    <property type="chains" value="EG=24-256"/>
</dbReference>
<dbReference type="PDB" id="7ZW0">
    <property type="method" value="EM"/>
    <property type="resolution" value="2.40 A"/>
    <property type="chains" value="LK=1-256"/>
</dbReference>
<dbReference type="PDB" id="8AAF">
    <property type="method" value="EM"/>
    <property type="resolution" value="2.50 A"/>
    <property type="chains" value="p=1-256"/>
</dbReference>
<dbReference type="PDB" id="8AGT">
    <property type="method" value="EM"/>
    <property type="resolution" value="2.60 A"/>
    <property type="chains" value="p=1-256"/>
</dbReference>
<dbReference type="PDB" id="8AGU">
    <property type="method" value="EM"/>
    <property type="resolution" value="2.70 A"/>
    <property type="chains" value="p=1-256"/>
</dbReference>
<dbReference type="PDB" id="8AGV">
    <property type="method" value="EM"/>
    <property type="resolution" value="2.60 A"/>
    <property type="chains" value="p=1-256"/>
</dbReference>
<dbReference type="PDB" id="8AGW">
    <property type="method" value="EM"/>
    <property type="resolution" value="2.60 A"/>
    <property type="chains" value="p=1-256"/>
</dbReference>
<dbReference type="PDB" id="8AGX">
    <property type="method" value="EM"/>
    <property type="resolution" value="2.40 A"/>
    <property type="chains" value="p=1-256"/>
</dbReference>
<dbReference type="PDB" id="8AGZ">
    <property type="method" value="EM"/>
    <property type="resolution" value="2.60 A"/>
    <property type="chains" value="p=1-256"/>
</dbReference>
<dbReference type="PDB" id="8BIP">
    <property type="method" value="EM"/>
    <property type="resolution" value="3.10 A"/>
    <property type="chains" value="LG=24-256"/>
</dbReference>
<dbReference type="PDB" id="8BJQ">
    <property type="method" value="EM"/>
    <property type="resolution" value="3.80 A"/>
    <property type="chains" value="LG=24-256"/>
</dbReference>
<dbReference type="PDB" id="8BN3">
    <property type="method" value="EM"/>
    <property type="resolution" value="2.40 A"/>
    <property type="chains" value="L8=24-256"/>
</dbReference>
<dbReference type="PDB" id="8BQD">
    <property type="method" value="EM"/>
    <property type="resolution" value="3.90 A"/>
    <property type="chains" value="AA=24-256"/>
</dbReference>
<dbReference type="PDB" id="8BQX">
    <property type="method" value="EM"/>
    <property type="resolution" value="3.80 A"/>
    <property type="chains" value="AA=24-256"/>
</dbReference>
<dbReference type="PDB" id="8CCS">
    <property type="method" value="EM"/>
    <property type="resolution" value="1.97 A"/>
    <property type="chains" value="KK=1-256"/>
</dbReference>
<dbReference type="PDB" id="8CDL">
    <property type="method" value="EM"/>
    <property type="resolution" value="2.72 A"/>
    <property type="chains" value="KK=1-256"/>
</dbReference>
<dbReference type="PDB" id="8CDR">
    <property type="method" value="EM"/>
    <property type="resolution" value="2.04 A"/>
    <property type="chains" value="KK=1-256"/>
</dbReference>
<dbReference type="PDB" id="8CEH">
    <property type="method" value="EM"/>
    <property type="resolution" value="2.05 A"/>
    <property type="chains" value="KK=1-256"/>
</dbReference>
<dbReference type="PDB" id="8CF5">
    <property type="method" value="EM"/>
    <property type="resolution" value="2.71 A"/>
    <property type="chains" value="KK=1-256"/>
</dbReference>
<dbReference type="PDB" id="8CG8">
    <property type="method" value="EM"/>
    <property type="resolution" value="2.57 A"/>
    <property type="chains" value="KK=1-256"/>
</dbReference>
<dbReference type="PDB" id="8CGN">
    <property type="method" value="EM"/>
    <property type="resolution" value="2.28 A"/>
    <property type="chains" value="KK=1-256"/>
</dbReference>
<dbReference type="PDB" id="8CIV">
    <property type="method" value="EM"/>
    <property type="resolution" value="2.47 A"/>
    <property type="chains" value="KK=1-256"/>
</dbReference>
<dbReference type="PDB" id="8CKU">
    <property type="method" value="EM"/>
    <property type="resolution" value="3.11 A"/>
    <property type="chains" value="KK=1-256"/>
</dbReference>
<dbReference type="PDB" id="8CMJ">
    <property type="method" value="EM"/>
    <property type="resolution" value="3.79 A"/>
    <property type="chains" value="KK=1-256"/>
</dbReference>
<dbReference type="PDB" id="8E5T">
    <property type="method" value="EM"/>
    <property type="resolution" value="4.00 A"/>
    <property type="chains" value="G=1-256"/>
</dbReference>
<dbReference type="PDB" id="8EUB">
    <property type="method" value="EM"/>
    <property type="resolution" value="2.52 A"/>
    <property type="chains" value="AG=1-256"/>
</dbReference>
<dbReference type="PDB" id="8EVP">
    <property type="method" value="EM"/>
    <property type="resolution" value="2.38 A"/>
    <property type="chains" value="AG=1-256"/>
</dbReference>
<dbReference type="PDB" id="8EVQ">
    <property type="method" value="EM"/>
    <property type="resolution" value="2.72 A"/>
    <property type="chains" value="AG=1-256"/>
</dbReference>
<dbReference type="PDB" id="8EVR">
    <property type="method" value="EM"/>
    <property type="resolution" value="2.87 A"/>
    <property type="chains" value="AG=1-256"/>
</dbReference>
<dbReference type="PDB" id="8EVS">
    <property type="method" value="EM"/>
    <property type="resolution" value="2.62 A"/>
    <property type="chains" value="AG=1-256"/>
</dbReference>
<dbReference type="PDB" id="8EVT">
    <property type="method" value="EM"/>
    <property type="resolution" value="2.20 A"/>
    <property type="chains" value="AG=1-256"/>
</dbReference>
<dbReference type="PDB" id="8EWB">
    <property type="method" value="EM"/>
    <property type="resolution" value="2.87 A"/>
    <property type="chains" value="AG=1-256"/>
</dbReference>
<dbReference type="PDB" id="8EWC">
    <property type="method" value="EM"/>
    <property type="resolution" value="2.45 A"/>
    <property type="chains" value="AG=1-256"/>
</dbReference>
<dbReference type="PDB" id="8HFR">
    <property type="method" value="EM"/>
    <property type="resolution" value="2.64 A"/>
    <property type="chains" value="Hj=1-256"/>
</dbReference>
<dbReference type="PDB" id="8K2D">
    <property type="method" value="EM"/>
    <property type="resolution" value="3.20 A"/>
    <property type="chains" value="LG=1-256"/>
</dbReference>
<dbReference type="PDB" id="8K82">
    <property type="method" value="EM"/>
    <property type="resolution" value="3.00 A"/>
    <property type="chains" value="LG=1-256"/>
</dbReference>
<dbReference type="PDB" id="8P4V">
    <property type="method" value="X-ray"/>
    <property type="resolution" value="3.16 A"/>
    <property type="chains" value="CJ/p=1-256"/>
</dbReference>
<dbReference type="PDB" id="8P8M">
    <property type="method" value="EM"/>
    <property type="resolution" value="2.66 A"/>
    <property type="chains" value="LL=1-256"/>
</dbReference>
<dbReference type="PDB" id="8P8N">
    <property type="method" value="EM"/>
    <property type="resolution" value="2.15 A"/>
    <property type="chains" value="LL=1-256"/>
</dbReference>
<dbReference type="PDB" id="8P8U">
    <property type="method" value="EM"/>
    <property type="resolution" value="2.23 A"/>
    <property type="chains" value="LL=1-256"/>
</dbReference>
<dbReference type="PDB" id="8P9A">
    <property type="method" value="X-ray"/>
    <property type="resolution" value="2.90 A"/>
    <property type="chains" value="CJ/p=1-256"/>
</dbReference>
<dbReference type="PDB" id="8PFR">
    <property type="method" value="EM"/>
    <property type="resolution" value="2.15 A"/>
    <property type="chains" value="LL=1-256"/>
</dbReference>
<dbReference type="PDB" id="8T2X">
    <property type="method" value="EM"/>
    <property type="resolution" value="2.46 A"/>
    <property type="chains" value="AG=1-256"/>
</dbReference>
<dbReference type="PDB" id="8T2Y">
    <property type="method" value="EM"/>
    <property type="resolution" value="2.20 A"/>
    <property type="chains" value="AG=1-256"/>
</dbReference>
<dbReference type="PDB" id="8T2Z">
    <property type="method" value="EM"/>
    <property type="resolution" value="2.40 A"/>
    <property type="chains" value="AG=1-256"/>
</dbReference>
<dbReference type="PDB" id="8T30">
    <property type="method" value="EM"/>
    <property type="resolution" value="2.88 A"/>
    <property type="chains" value="AG=1-256"/>
</dbReference>
<dbReference type="PDB" id="8T3A">
    <property type="method" value="EM"/>
    <property type="resolution" value="2.86 A"/>
    <property type="chains" value="AG=1-256"/>
</dbReference>
<dbReference type="PDB" id="8T3B">
    <property type="method" value="EM"/>
    <property type="resolution" value="3.08 A"/>
    <property type="chains" value="AG=1-256"/>
</dbReference>
<dbReference type="PDB" id="8T3C">
    <property type="method" value="EM"/>
    <property type="resolution" value="3.86 A"/>
    <property type="chains" value="AG=1-256"/>
</dbReference>
<dbReference type="PDB" id="8T3D">
    <property type="method" value="EM"/>
    <property type="resolution" value="2.95 A"/>
    <property type="chains" value="AG=1-256"/>
</dbReference>
<dbReference type="PDB" id="8T3E">
    <property type="method" value="EM"/>
    <property type="resolution" value="3.04 A"/>
    <property type="chains" value="AG=1-256"/>
</dbReference>
<dbReference type="PDB" id="8T3F">
    <property type="method" value="EM"/>
    <property type="resolution" value="3.09 A"/>
    <property type="chains" value="AG=1-256"/>
</dbReference>
<dbReference type="PDB" id="8UT0">
    <property type="method" value="EM"/>
    <property type="resolution" value="3.22 A"/>
    <property type="chains" value="LJ=24-256"/>
</dbReference>
<dbReference type="PDB" id="8UTI">
    <property type="method" value="EM"/>
    <property type="resolution" value="3.13 A"/>
    <property type="chains" value="LJ=24-256"/>
</dbReference>
<dbReference type="PDB" id="8V83">
    <property type="method" value="EM"/>
    <property type="resolution" value="2.53 A"/>
    <property type="chains" value="G=1-256"/>
</dbReference>
<dbReference type="PDB" id="8V84">
    <property type="method" value="EM"/>
    <property type="resolution" value="2.70 A"/>
    <property type="chains" value="G=1-256"/>
</dbReference>
<dbReference type="PDB" id="8V87">
    <property type="method" value="EM"/>
    <property type="resolution" value="2.66 A"/>
    <property type="chains" value="G=1-256"/>
</dbReference>
<dbReference type="PDB" id="8XU8">
    <property type="method" value="EM"/>
    <property type="resolution" value="3.40 A"/>
    <property type="chains" value="J=24-256"/>
</dbReference>
<dbReference type="PDB" id="8Y0U">
    <property type="method" value="EM"/>
    <property type="resolution" value="3.59 A"/>
    <property type="chains" value="LG=1-256"/>
</dbReference>
<dbReference type="PDB" id="8YLD">
    <property type="method" value="EM"/>
    <property type="resolution" value="3.90 A"/>
    <property type="chains" value="J=24-256"/>
</dbReference>
<dbReference type="PDB" id="8YLR">
    <property type="method" value="EM"/>
    <property type="resolution" value="3.90 A"/>
    <property type="chains" value="J=24-256"/>
</dbReference>
<dbReference type="PDB" id="8Z70">
    <property type="method" value="EM"/>
    <property type="resolution" value="3.20 A"/>
    <property type="chains" value="J=24-256"/>
</dbReference>
<dbReference type="PDB" id="8Z71">
    <property type="method" value="EM"/>
    <property type="resolution" value="3.60 A"/>
    <property type="chains" value="J=24-256"/>
</dbReference>
<dbReference type="PDB" id="9F9S">
    <property type="method" value="EM"/>
    <property type="resolution" value="2.90 A"/>
    <property type="chains" value="LC/MC=1-256"/>
</dbReference>
<dbReference type="PDBsum" id="3J6X"/>
<dbReference type="PDBsum" id="3J6Y"/>
<dbReference type="PDBsum" id="3J77"/>
<dbReference type="PDBsum" id="3J78"/>
<dbReference type="PDBsum" id="3JCT"/>
<dbReference type="PDBsum" id="4U3M"/>
<dbReference type="PDBsum" id="4U3N"/>
<dbReference type="PDBsum" id="4U3U"/>
<dbReference type="PDBsum" id="4U4N"/>
<dbReference type="PDBsum" id="4U4O"/>
<dbReference type="PDBsum" id="4U4Q"/>
<dbReference type="PDBsum" id="4U4R"/>
<dbReference type="PDBsum" id="4U4U"/>
<dbReference type="PDBsum" id="4U4Y"/>
<dbReference type="PDBsum" id="4U4Z"/>
<dbReference type="PDBsum" id="4U50"/>
<dbReference type="PDBsum" id="4U51"/>
<dbReference type="PDBsum" id="4U52"/>
<dbReference type="PDBsum" id="4U53"/>
<dbReference type="PDBsum" id="4U55"/>
<dbReference type="PDBsum" id="4U56"/>
<dbReference type="PDBsum" id="4U6F"/>
<dbReference type="PDBsum" id="4V4B"/>
<dbReference type="PDBsum" id="4V5Z"/>
<dbReference type="PDBsum" id="4V6I"/>
<dbReference type="PDBsum" id="4V7F"/>
<dbReference type="PDBsum" id="4V7R"/>
<dbReference type="PDBsum" id="4V88"/>
<dbReference type="PDBsum" id="4V8T"/>
<dbReference type="PDBsum" id="4V8Y"/>
<dbReference type="PDBsum" id="4V8Z"/>
<dbReference type="PDBsum" id="4V91"/>
<dbReference type="PDBsum" id="5APN"/>
<dbReference type="PDBsum" id="5APO"/>
<dbReference type="PDBsum" id="5DAT"/>
<dbReference type="PDBsum" id="5DC3"/>
<dbReference type="PDBsum" id="5DGE"/>
<dbReference type="PDBsum" id="5DGF"/>
<dbReference type="PDBsum" id="5FCI"/>
<dbReference type="PDBsum" id="5FCJ"/>
<dbReference type="PDBsum" id="5GAK"/>
<dbReference type="PDBsum" id="5H4P"/>
<dbReference type="PDBsum" id="5I4L"/>
<dbReference type="PDBsum" id="5JCS"/>
<dbReference type="PDBsum" id="5JUO"/>
<dbReference type="PDBsum" id="5JUP"/>
<dbReference type="PDBsum" id="5JUS"/>
<dbReference type="PDBsum" id="5JUT"/>
<dbReference type="PDBsum" id="5JUU"/>
<dbReference type="PDBsum" id="5LYB"/>
<dbReference type="PDBsum" id="5M1J"/>
<dbReference type="PDBsum" id="5MC6"/>
<dbReference type="PDBsum" id="5MEI"/>
<dbReference type="PDBsum" id="5NDG"/>
<dbReference type="PDBsum" id="5NDV"/>
<dbReference type="PDBsum" id="5NDW"/>
<dbReference type="PDBsum" id="5OBM"/>
<dbReference type="PDBsum" id="5ON6"/>
<dbReference type="PDBsum" id="5T62"/>
<dbReference type="PDBsum" id="5T6R"/>
<dbReference type="PDBsum" id="5TBW"/>
<dbReference type="PDBsum" id="5TGA"/>
<dbReference type="PDBsum" id="5TGM"/>
<dbReference type="PDBsum" id="5Z3G"/>
<dbReference type="PDBsum" id="6C0F"/>
<dbReference type="PDBsum" id="6CB1"/>
<dbReference type="PDBsum" id="6ELZ"/>
<dbReference type="PDBsum" id="6EM1"/>
<dbReference type="PDBsum" id="6EM3"/>
<dbReference type="PDBsum" id="6EM4"/>
<dbReference type="PDBsum" id="6EM5"/>
<dbReference type="PDBsum" id="6FT6"/>
<dbReference type="PDBsum" id="6GQ1"/>
<dbReference type="PDBsum" id="6GQB"/>
<dbReference type="PDBsum" id="6GQV"/>
<dbReference type="PDBsum" id="6HD7"/>
<dbReference type="PDBsum" id="6HHQ"/>
<dbReference type="PDBsum" id="6I7O"/>
<dbReference type="PDBsum" id="6M62"/>
<dbReference type="PDBsum" id="6N8J"/>
<dbReference type="PDBsum" id="6N8K"/>
<dbReference type="PDBsum" id="6N8L"/>
<dbReference type="PDBsum" id="6N8M"/>
<dbReference type="PDBsum" id="6N8N"/>
<dbReference type="PDBsum" id="6N8O"/>
<dbReference type="PDBsum" id="6OIG"/>
<dbReference type="PDBsum" id="6Q8Y"/>
<dbReference type="PDBsum" id="6QIK"/>
<dbReference type="PDBsum" id="6QT0"/>
<dbReference type="PDBsum" id="6QTZ"/>
<dbReference type="PDBsum" id="6R84"/>
<dbReference type="PDBsum" id="6R86"/>
<dbReference type="PDBsum" id="6R87"/>
<dbReference type="PDBsum" id="6RI5"/>
<dbReference type="PDBsum" id="6RZZ"/>
<dbReference type="PDBsum" id="6S05"/>
<dbReference type="PDBsum" id="6S47"/>
<dbReference type="PDBsum" id="6SNT"/>
<dbReference type="PDBsum" id="6SV4"/>
<dbReference type="PDBsum" id="6T4Q"/>
<dbReference type="PDBsum" id="6T7I"/>
<dbReference type="PDBsum" id="6T7T"/>
<dbReference type="PDBsum" id="6T83"/>
<dbReference type="PDBsum" id="6TB3"/>
<dbReference type="PDBsum" id="6TNU"/>
<dbReference type="PDBsum" id="6WOO"/>
<dbReference type="PDBsum" id="6YLG"/>
<dbReference type="PDBsum" id="6YLH"/>
<dbReference type="PDBsum" id="6YLX"/>
<dbReference type="PDBsum" id="6YLY"/>
<dbReference type="PDBsum" id="6Z6J"/>
<dbReference type="PDBsum" id="6Z6K"/>
<dbReference type="PDBsum" id="7AZY"/>
<dbReference type="PDBsum" id="7B7D"/>
<dbReference type="PDBsum" id="7BT6"/>
<dbReference type="PDBsum" id="7BTB"/>
<dbReference type="PDBsum" id="7MPI"/>
<dbReference type="PDBsum" id="7MPJ"/>
<dbReference type="PDBsum" id="7N8B"/>
<dbReference type="PDBsum" id="7NAC"/>
<dbReference type="PDBsum" id="7NAD"/>
<dbReference type="PDBsum" id="7NRC"/>
<dbReference type="PDBsum" id="7NRD"/>
<dbReference type="PDBsum" id="7OF1"/>
<dbReference type="PDBsum" id="7OH3"/>
<dbReference type="PDBsum" id="7OHP"/>
<dbReference type="PDBsum" id="7OHQ"/>
<dbReference type="PDBsum" id="7OHR"/>
<dbReference type="PDBsum" id="7OHS"/>
<dbReference type="PDBsum" id="7OHU"/>
<dbReference type="PDBsum" id="7OHV"/>
<dbReference type="PDBsum" id="7OHW"/>
<dbReference type="PDBsum" id="7OHX"/>
<dbReference type="PDBsum" id="7OHY"/>
<dbReference type="PDBsum" id="7OSA"/>
<dbReference type="PDBsum" id="7OSM"/>
<dbReference type="PDBsum" id="7R6K"/>
<dbReference type="PDBsum" id="7R6Q"/>
<dbReference type="PDBsum" id="7R72"/>
<dbReference type="PDBsum" id="7R7A"/>
<dbReference type="PDBsum" id="7RR5"/>
<dbReference type="PDBsum" id="7TOO"/>
<dbReference type="PDBsum" id="7TOP"/>
<dbReference type="PDBsum" id="7U0H"/>
<dbReference type="PDBsum" id="7UG6"/>
<dbReference type="PDBsum" id="7UOO"/>
<dbReference type="PDBsum" id="7UQB"/>
<dbReference type="PDBsum" id="7UQZ"/>
<dbReference type="PDBsum" id="7V08"/>
<dbReference type="PDBsum" id="7Z34"/>
<dbReference type="PDBsum" id="7ZPQ"/>
<dbReference type="PDBsum" id="7ZRS"/>
<dbReference type="PDBsum" id="7ZS5"/>
<dbReference type="PDBsum" id="7ZUW"/>
<dbReference type="PDBsum" id="7ZUX"/>
<dbReference type="PDBsum" id="7ZW0"/>
<dbReference type="PDBsum" id="8AAF"/>
<dbReference type="PDBsum" id="8AGT"/>
<dbReference type="PDBsum" id="8AGU"/>
<dbReference type="PDBsum" id="8AGV"/>
<dbReference type="PDBsum" id="8AGW"/>
<dbReference type="PDBsum" id="8AGX"/>
<dbReference type="PDBsum" id="8AGZ"/>
<dbReference type="PDBsum" id="8BIP"/>
<dbReference type="PDBsum" id="8BJQ"/>
<dbReference type="PDBsum" id="8BN3"/>
<dbReference type="PDBsum" id="8BQD"/>
<dbReference type="PDBsum" id="8BQX"/>
<dbReference type="PDBsum" id="8CCS"/>
<dbReference type="PDBsum" id="8CDL"/>
<dbReference type="PDBsum" id="8CDR"/>
<dbReference type="PDBsum" id="8CEH"/>
<dbReference type="PDBsum" id="8CF5"/>
<dbReference type="PDBsum" id="8CG8"/>
<dbReference type="PDBsum" id="8CGN"/>
<dbReference type="PDBsum" id="8CIV"/>
<dbReference type="PDBsum" id="8CKU"/>
<dbReference type="PDBsum" id="8CMJ"/>
<dbReference type="PDBsum" id="8E5T"/>
<dbReference type="PDBsum" id="8EUB"/>
<dbReference type="PDBsum" id="8EVP"/>
<dbReference type="PDBsum" id="8EVQ"/>
<dbReference type="PDBsum" id="8EVR"/>
<dbReference type="PDBsum" id="8EVS"/>
<dbReference type="PDBsum" id="8EVT"/>
<dbReference type="PDBsum" id="8EWB"/>
<dbReference type="PDBsum" id="8EWC"/>
<dbReference type="PDBsum" id="8HFR"/>
<dbReference type="PDBsum" id="8K2D"/>
<dbReference type="PDBsum" id="8K82"/>
<dbReference type="PDBsum" id="8P4V"/>
<dbReference type="PDBsum" id="8P8M"/>
<dbReference type="PDBsum" id="8P8N"/>
<dbReference type="PDBsum" id="8P8U"/>
<dbReference type="PDBsum" id="8P9A"/>
<dbReference type="PDBsum" id="8PFR"/>
<dbReference type="PDBsum" id="8T2X"/>
<dbReference type="PDBsum" id="8T2Y"/>
<dbReference type="PDBsum" id="8T2Z"/>
<dbReference type="PDBsum" id="8T30"/>
<dbReference type="PDBsum" id="8T3A"/>
<dbReference type="PDBsum" id="8T3B"/>
<dbReference type="PDBsum" id="8T3C"/>
<dbReference type="PDBsum" id="8T3D"/>
<dbReference type="PDBsum" id="8T3E"/>
<dbReference type="PDBsum" id="8T3F"/>
<dbReference type="PDBsum" id="8UT0"/>
<dbReference type="PDBsum" id="8UTI"/>
<dbReference type="PDBsum" id="8V83"/>
<dbReference type="PDBsum" id="8V84"/>
<dbReference type="PDBsum" id="8V87"/>
<dbReference type="PDBsum" id="8XU8"/>
<dbReference type="PDBsum" id="8Y0U"/>
<dbReference type="PDBsum" id="8YLD"/>
<dbReference type="PDBsum" id="8YLR"/>
<dbReference type="PDBsum" id="8Z70"/>
<dbReference type="PDBsum" id="8Z71"/>
<dbReference type="PDBsum" id="9F9S"/>
<dbReference type="EMDB" id="EMD-0047"/>
<dbReference type="EMDB" id="EMD-0048"/>
<dbReference type="EMDB" id="EMD-0049"/>
<dbReference type="EMDB" id="EMD-0202"/>
<dbReference type="EMDB" id="EMD-0369"/>
<dbReference type="EMDB" id="EMD-0370"/>
<dbReference type="EMDB" id="EMD-0371"/>
<dbReference type="EMDB" id="EMD-0372"/>
<dbReference type="EMDB" id="EMD-0373"/>
<dbReference type="EMDB" id="EMD-0374"/>
<dbReference type="EMDB" id="EMD-10068"/>
<dbReference type="EMDB" id="EMD-10071"/>
<dbReference type="EMDB" id="EMD-10098"/>
<dbReference type="EMDB" id="EMD-10262"/>
<dbReference type="EMDB" id="EMD-10315"/>
<dbReference type="EMDB" id="EMD-10377"/>
<dbReference type="EMDB" id="EMD-10396"/>
<dbReference type="EMDB" id="EMD-10397"/>
<dbReference type="EMDB" id="EMD-10398"/>
<dbReference type="EMDB" id="EMD-10431"/>
<dbReference type="EMDB" id="EMD-10537"/>
<dbReference type="EMDB" id="EMD-10838"/>
<dbReference type="EMDB" id="EMD-10839"/>
<dbReference type="EMDB" id="EMD-10841"/>
<dbReference type="EMDB" id="EMD-10842"/>
<dbReference type="EMDB" id="EMD-11096"/>
<dbReference type="EMDB" id="EMD-11097"/>
<dbReference type="EMDB" id="EMD-11951"/>
<dbReference type="EMDB" id="EMD-12081"/>
<dbReference type="EMDB" id="EMD-12534"/>
<dbReference type="EMDB" id="EMD-12535"/>
<dbReference type="EMDB" id="EMD-12866"/>
<dbReference type="EMDB" id="EMD-12892"/>
<dbReference type="EMDB" id="EMD-12904"/>
<dbReference type="EMDB" id="EMD-12905"/>
<dbReference type="EMDB" id="EMD-12906"/>
<dbReference type="EMDB" id="EMD-12907"/>
<dbReference type="EMDB" id="EMD-12909"/>
<dbReference type="EMDB" id="EMD-12910"/>
<dbReference type="EMDB" id="EMD-12911"/>
<dbReference type="EMDB" id="EMD-12912"/>
<dbReference type="EMDB" id="EMD-12913"/>
<dbReference type="EMDB" id="EMD-14471"/>
<dbReference type="EMDB" id="EMD-14861"/>
<dbReference type="EMDB" id="EMD-14921"/>
<dbReference type="EMDB" id="EMD-14926"/>
<dbReference type="EMDB" id="EMD-14979"/>
<dbReference type="EMDB" id="EMD-14990"/>
<dbReference type="EMDB" id="EMD-15296"/>
<dbReference type="EMDB" id="EMD-15423"/>
<dbReference type="EMDB" id="EMD-15424"/>
<dbReference type="EMDB" id="EMD-15425"/>
<dbReference type="EMDB" id="EMD-15426"/>
<dbReference type="EMDB" id="EMD-15427"/>
<dbReference type="EMDB" id="EMD-15428"/>
<dbReference type="EMDB" id="EMD-16086"/>
<dbReference type="EMDB" id="EMD-16090"/>
<dbReference type="EMDB" id="EMD-16127"/>
<dbReference type="EMDB" id="EMD-16182"/>
<dbReference type="EMDB" id="EMD-16191"/>
<dbReference type="EMDB" id="EMD-16563"/>
<dbReference type="EMDB" id="EMD-16591"/>
<dbReference type="EMDB" id="EMD-16594"/>
<dbReference type="EMDB" id="EMD-16609"/>
<dbReference type="EMDB" id="EMD-16616"/>
<dbReference type="EMDB" id="EMD-16634"/>
<dbReference type="EMDB" id="EMD-16648"/>
<dbReference type="EMDB" id="EMD-16684"/>
<dbReference type="EMDB" id="EMD-16702"/>
<dbReference type="EMDB" id="EMD-16729"/>
<dbReference type="EMDB" id="EMD-17549"/>
<dbReference type="EMDB" id="EMD-17550"/>
<dbReference type="EMDB" id="EMD-17552"/>
<dbReference type="EMDB" id="EMD-17653"/>
<dbReference type="EMDB" id="EMD-20077"/>
<dbReference type="EMDB" id="EMD-21859"/>
<dbReference type="EMDB" id="EMD-23934"/>
<dbReference type="EMDB" id="EMD-23935"/>
<dbReference type="EMDB" id="EMD-24235"/>
<dbReference type="EMDB" id="EMD-24269"/>
<dbReference type="EMDB" id="EMD-24280"/>
<dbReference type="EMDB" id="EMD-24286"/>
<dbReference type="EMDB" id="EMD-24290"/>
<dbReference type="EMDB" id="EMD-24296"/>
<dbReference type="EMDB" id="EMD-24652"/>
<dbReference type="EMDB" id="EMD-26033"/>
<dbReference type="EMDB" id="EMD-26034"/>
<dbReference type="EMDB" id="EMD-26259"/>
<dbReference type="EMDB" id="EMD-26485"/>
<dbReference type="EMDB" id="EMD-26651"/>
<dbReference type="EMDB" id="EMD-26686"/>
<dbReference type="EMDB" id="EMD-26703"/>
<dbReference type="EMDB" id="EMD-27919"/>
<dbReference type="EMDB" id="EMD-28610"/>
<dbReference type="EMDB" id="EMD-28632"/>
<dbReference type="EMDB" id="EMD-28633"/>
<dbReference type="EMDB" id="EMD-28634"/>
<dbReference type="EMDB" id="EMD-28635"/>
<dbReference type="EMDB" id="EMD-28636"/>
<dbReference type="EMDB" id="EMD-28642"/>
<dbReference type="EMDB" id="EMD-28643"/>
<dbReference type="EMDB" id="EMD-30108"/>
<dbReference type="EMDB" id="EMD-30170"/>
<dbReference type="EMDB" id="EMD-30174"/>
<dbReference type="EMDB" id="EMD-3461"/>
<dbReference type="EMDB" id="EMD-34725"/>
<dbReference type="EMDB" id="EMD-36839"/>
<dbReference type="EMDB" id="EMD-36945"/>
<dbReference type="EMDB" id="EMD-38660"/>
<dbReference type="EMDB" id="EMD-40990"/>
<dbReference type="EMDB" id="EMD-40991"/>
<dbReference type="EMDB" id="EMD-40992"/>
<dbReference type="EMDB" id="EMD-40993"/>
<dbReference type="EMDB" id="EMD-40997"/>
<dbReference type="EMDB" id="EMD-40998"/>
<dbReference type="EMDB" id="EMD-40999"/>
<dbReference type="EMDB" id="EMD-41000"/>
<dbReference type="EMDB" id="EMD-41001"/>
<dbReference type="EMDB" id="EMD-41002"/>
<dbReference type="EMDB" id="EMD-4140"/>
<dbReference type="EMDB" id="EMD-43017"/>
<dbReference type="EMDB" id="EMD-4302"/>
<dbReference type="EMDB" id="EMD-43021"/>
<dbReference type="EMDB" id="EMD-43027"/>
<dbReference type="EMDB" id="EMD-4427"/>
<dbReference type="EMDB" id="EMD-4474"/>
<dbReference type="EMDB" id="EMD-4560"/>
<dbReference type="EMDB" id="EMD-4630"/>
<dbReference type="EMDB" id="EMD-4636"/>
<dbReference type="EMDB" id="EMD-4751"/>
<dbReference type="EMDB" id="EMD-4752"/>
<dbReference type="EMDB" id="EMD-4753"/>
<dbReference type="EMDB" id="EMD-4884"/>
<dbReference type="EMDB" id="EMD-50259"/>
<dbReference type="EMDB" id="EMD-6878"/>
<dbReference type="EMDB" id="EMD-7324"/>
<dbReference type="EMDB" id="EMD-7445"/>
<dbReference type="EMDB" id="EMD-8362"/>
<dbReference type="EMDB" id="EMD-8368"/>
<dbReference type="SMR" id="P17076"/>
<dbReference type="BioGRID" id="36389">
    <property type="interactions" value="525"/>
</dbReference>
<dbReference type="ComplexPortal" id="CPX-1601">
    <property type="entry name" value="60S cytosolic large ribosomal subunit"/>
</dbReference>
<dbReference type="DIP" id="DIP-5102N"/>
<dbReference type="FunCoup" id="P17076">
    <property type="interactions" value="1218"/>
</dbReference>
<dbReference type="IntAct" id="P17076">
    <property type="interactions" value="133"/>
</dbReference>
<dbReference type="MINT" id="P17076"/>
<dbReference type="STRING" id="4932.YHL033C"/>
<dbReference type="CarbonylDB" id="P17076"/>
<dbReference type="iPTMnet" id="P17076"/>
<dbReference type="PaxDb" id="4932-YHL033C"/>
<dbReference type="PeptideAtlas" id="P17076"/>
<dbReference type="EnsemblFungi" id="YHL033C_mRNA">
    <property type="protein sequence ID" value="YHL033C"/>
    <property type="gene ID" value="YHL033C"/>
</dbReference>
<dbReference type="GeneID" id="856352"/>
<dbReference type="KEGG" id="sce:YHL033C"/>
<dbReference type="AGR" id="SGD:S000001025"/>
<dbReference type="SGD" id="S000001025">
    <property type="gene designation" value="RPL8A"/>
</dbReference>
<dbReference type="VEuPathDB" id="FungiDB:YHL033C"/>
<dbReference type="eggNOG" id="KOG3166">
    <property type="taxonomic scope" value="Eukaryota"/>
</dbReference>
<dbReference type="GeneTree" id="ENSGT00940000170054"/>
<dbReference type="HOGENOM" id="CLU_055193_0_0_1"/>
<dbReference type="InParanoid" id="P17076"/>
<dbReference type="OMA" id="TTLCLCG"/>
<dbReference type="OrthoDB" id="29563at2759"/>
<dbReference type="BioCyc" id="YEAST:G3O-31052-MONOMER"/>
<dbReference type="BioGRID-ORCS" id="856352">
    <property type="hits" value="5 hits in 10 CRISPR screens"/>
</dbReference>
<dbReference type="PRO" id="PR:P17076"/>
<dbReference type="Proteomes" id="UP000002311">
    <property type="component" value="Chromosome VIII"/>
</dbReference>
<dbReference type="RNAct" id="P17076">
    <property type="molecule type" value="protein"/>
</dbReference>
<dbReference type="GO" id="GO:0005829">
    <property type="term" value="C:cytosol"/>
    <property type="evidence" value="ECO:0000304"/>
    <property type="project" value="Reactome"/>
</dbReference>
<dbReference type="GO" id="GO:0022625">
    <property type="term" value="C:cytosolic large ribosomal subunit"/>
    <property type="evidence" value="ECO:0000314"/>
    <property type="project" value="SGD"/>
</dbReference>
<dbReference type="GO" id="GO:0003723">
    <property type="term" value="F:RNA binding"/>
    <property type="evidence" value="ECO:0000318"/>
    <property type="project" value="GO_Central"/>
</dbReference>
<dbReference type="GO" id="GO:0003735">
    <property type="term" value="F:structural constituent of ribosome"/>
    <property type="evidence" value="ECO:0000305"/>
    <property type="project" value="SGD"/>
</dbReference>
<dbReference type="GO" id="GO:0002181">
    <property type="term" value="P:cytoplasmic translation"/>
    <property type="evidence" value="ECO:0000305"/>
    <property type="project" value="SGD"/>
</dbReference>
<dbReference type="GO" id="GO:0000470">
    <property type="term" value="P:maturation of LSU-rRNA"/>
    <property type="evidence" value="ECO:0000315"/>
    <property type="project" value="SGD"/>
</dbReference>
<dbReference type="FunFam" id="3.30.1330.30:FF:000003">
    <property type="entry name" value="60S ribosomal protein L7a"/>
    <property type="match status" value="1"/>
</dbReference>
<dbReference type="Gene3D" id="3.30.1330.30">
    <property type="match status" value="1"/>
</dbReference>
<dbReference type="InterPro" id="IPR050257">
    <property type="entry name" value="eL8/uL1-like"/>
</dbReference>
<dbReference type="InterPro" id="IPR029064">
    <property type="entry name" value="Ribosomal_eL30-like_sf"/>
</dbReference>
<dbReference type="InterPro" id="IPR004037">
    <property type="entry name" value="Ribosomal_eL8-like_CS"/>
</dbReference>
<dbReference type="InterPro" id="IPR004038">
    <property type="entry name" value="Ribosomal_eL8/eL30/eS12/Gad45"/>
</dbReference>
<dbReference type="InterPro" id="IPR018492">
    <property type="entry name" value="Ribosomal_eL8/Nhp2"/>
</dbReference>
<dbReference type="InterPro" id="IPR001921">
    <property type="entry name" value="Ribosomal_eL8_euk"/>
</dbReference>
<dbReference type="PANTHER" id="PTHR23105">
    <property type="entry name" value="RIBOSOMAL PROTEIN L7AE FAMILY MEMBER"/>
    <property type="match status" value="1"/>
</dbReference>
<dbReference type="Pfam" id="PF01248">
    <property type="entry name" value="Ribosomal_L7Ae"/>
    <property type="match status" value="1"/>
</dbReference>
<dbReference type="PRINTS" id="PR00881">
    <property type="entry name" value="L7ARS6FAMILY"/>
</dbReference>
<dbReference type="PRINTS" id="PR00882">
    <property type="entry name" value="RIBOSOMALL7A"/>
</dbReference>
<dbReference type="SUPFAM" id="SSF55315">
    <property type="entry name" value="L30e-like"/>
    <property type="match status" value="1"/>
</dbReference>
<dbReference type="PROSITE" id="PS01082">
    <property type="entry name" value="RIBOSOMAL_L7AE"/>
    <property type="match status" value="1"/>
</dbReference>
<reference key="1">
    <citation type="journal article" date="1991" name="Mol. Gen. Genet.">
        <title>The organization and expression of the Saccharomyces cerevisiae L4 ribosomal protein genes and their identification as the homologues of the mammalian ribosomal protein gene L7a.</title>
        <authorList>
            <person name="Yon J."/>
            <person name="Giallongo A."/>
            <person name="Fried M."/>
        </authorList>
    </citation>
    <scope>NUCLEOTIDE SEQUENCE [GENOMIC DNA]</scope>
    <source>
        <strain>ATCC 204508 / S288c</strain>
    </source>
</reference>
<reference key="2">
    <citation type="journal article" date="1990" name="Nucleic Acids Res.">
        <title>Ribosomal protein L4 of Saccharomyces cerevisiae: the gene and its protein.</title>
        <authorList>
            <person name="Arevalo S.G."/>
            <person name="Warner J.R."/>
        </authorList>
    </citation>
    <scope>NUCLEOTIDE SEQUENCE [GENOMIC DNA]</scope>
    <source>
        <strain>ATCC 204626 / S288c / A364A</strain>
    </source>
</reference>
<reference key="3">
    <citation type="journal article" date="1976" name="J. Mol. Biol.">
        <title>Chromosomal genes essential for replication of a double-stranded RNA plasmid of Saccharomyces cerevisiae: the killer character of yeast.</title>
        <authorList>
            <person name="Wickner R.B."/>
            <person name="Leibowitz M.J."/>
        </authorList>
    </citation>
    <scope>NUCLEOTIDE SEQUENCE [GENOMIC DNA]</scope>
</reference>
<reference key="4">
    <citation type="journal article" date="1994" name="Science">
        <title>Complete nucleotide sequence of Saccharomyces cerevisiae chromosome VIII.</title>
        <authorList>
            <person name="Johnston M."/>
            <person name="Andrews S."/>
            <person name="Brinkman R."/>
            <person name="Cooper J."/>
            <person name="Ding H."/>
            <person name="Dover J."/>
            <person name="Du Z."/>
            <person name="Favello A."/>
            <person name="Fulton L."/>
            <person name="Gattung S."/>
            <person name="Geisel C."/>
            <person name="Kirsten J."/>
            <person name="Kucaba T."/>
            <person name="Hillier L.W."/>
            <person name="Jier M."/>
            <person name="Johnston L."/>
            <person name="Langston Y."/>
            <person name="Latreille P."/>
            <person name="Louis E.J."/>
            <person name="Macri C."/>
            <person name="Mardis E."/>
            <person name="Menezes S."/>
            <person name="Mouser L."/>
            <person name="Nhan M."/>
            <person name="Rifkin L."/>
            <person name="Riles L."/>
            <person name="St Peter H."/>
            <person name="Trevaskis E."/>
            <person name="Vaughan K."/>
            <person name="Vignati D."/>
            <person name="Wilcox L."/>
            <person name="Wohldman P."/>
            <person name="Waterston R."/>
            <person name="Wilson R."/>
            <person name="Vaudin M."/>
        </authorList>
    </citation>
    <scope>NUCLEOTIDE SEQUENCE [LARGE SCALE GENOMIC DNA]</scope>
    <source>
        <strain>ATCC 204508 / S288c</strain>
    </source>
</reference>
<reference key="5">
    <citation type="journal article" date="2014" name="G3 (Bethesda)">
        <title>The reference genome sequence of Saccharomyces cerevisiae: Then and now.</title>
        <authorList>
            <person name="Engel S.R."/>
            <person name="Dietrich F.S."/>
            <person name="Fisk D.G."/>
            <person name="Binkley G."/>
            <person name="Balakrishnan R."/>
            <person name="Costanzo M.C."/>
            <person name="Dwight S.S."/>
            <person name="Hitz B.C."/>
            <person name="Karra K."/>
            <person name="Nash R.S."/>
            <person name="Weng S."/>
            <person name="Wong E.D."/>
            <person name="Lloyd P."/>
            <person name="Skrzypek M.S."/>
            <person name="Miyasato S.R."/>
            <person name="Simison M."/>
            <person name="Cherry J.M."/>
        </authorList>
    </citation>
    <scope>GENOME REANNOTATION</scope>
    <source>
        <strain>ATCC 204508 / S288c</strain>
    </source>
</reference>
<reference key="6">
    <citation type="journal article" date="1992" name="J. Biol. Chem.">
        <title>NH2-terminal acetylation of ribosomal proteins of Saccharomyces cerevisiae.</title>
        <authorList>
            <person name="Takakura H."/>
            <person name="Tsunasawa S."/>
            <person name="Miyagi M."/>
            <person name="Warner J.R."/>
        </authorList>
    </citation>
    <scope>PROTEIN SEQUENCE OF 2-20</scope>
</reference>
<reference key="7">
    <citation type="journal article" date="1995" name="Mol. Cell. Biol.">
        <title>Yeast virus propagation depends critically on free 60S ribosomal subunit concentration.</title>
        <authorList>
            <person name="Ohtake Y."/>
            <person name="Wickner R.B."/>
        </authorList>
    </citation>
    <scope>IDENTIFICATION AS MAK7</scope>
</reference>
<reference key="8">
    <citation type="journal article" date="1998" name="Yeast">
        <title>The list of cytoplasmic ribosomal proteins of Saccharomyces cerevisiae.</title>
        <authorList>
            <person name="Planta R.J."/>
            <person name="Mager W.H."/>
        </authorList>
    </citation>
    <scope>NOMENCLATURE</scope>
    <scope>SUBUNIT</scope>
</reference>
<reference key="9">
    <citation type="journal article" date="1999" name="J. Biol. Chem.">
        <title>The action of N-terminal acetyltransferases on yeast ribosomal proteins.</title>
        <authorList>
            <person name="Arnold R.J."/>
            <person name="Polevoda B."/>
            <person name="Reilly J.P."/>
            <person name="Sherman F."/>
        </authorList>
    </citation>
    <scope>CLEAVAGE OF INITIATOR METHIONINE</scope>
</reference>
<reference key="10">
    <citation type="journal article" date="2003" name="Nature">
        <title>Global analysis of protein localization in budding yeast.</title>
        <authorList>
            <person name="Huh W.-K."/>
            <person name="Falvo J.V."/>
            <person name="Gerke L.C."/>
            <person name="Carroll A.S."/>
            <person name="Howson R.W."/>
            <person name="Weissman J.S."/>
            <person name="O'Shea E.K."/>
        </authorList>
    </citation>
    <scope>SUBCELLULAR LOCATION [LARGE SCALE ANALYSIS]</scope>
</reference>
<reference key="11">
    <citation type="journal article" date="2003" name="Nature">
        <title>Global analysis of protein expression in yeast.</title>
        <authorList>
            <person name="Ghaemmaghami S."/>
            <person name="Huh W.-K."/>
            <person name="Bower K."/>
            <person name="Howson R.W."/>
            <person name="Belle A."/>
            <person name="Dephoure N."/>
            <person name="O'Shea E.K."/>
            <person name="Weissman J.S."/>
        </authorList>
    </citation>
    <scope>LEVEL OF PROTEIN EXPRESSION [LARGE SCALE ANALYSIS]</scope>
</reference>
<reference key="12">
    <citation type="journal article" date="2014" name="Curr. Opin. Struct. Biol.">
        <title>A new system for naming ribosomal proteins.</title>
        <authorList>
            <person name="Ban N."/>
            <person name="Beckmann R."/>
            <person name="Cate J.H.D."/>
            <person name="Dinman J.D."/>
            <person name="Dragon F."/>
            <person name="Ellis S.R."/>
            <person name="Lafontaine D.L.J."/>
            <person name="Lindahl L."/>
            <person name="Liljas A."/>
            <person name="Lipton J.M."/>
            <person name="McAlear M.A."/>
            <person name="Moore P.B."/>
            <person name="Noller H.F."/>
            <person name="Ortega J."/>
            <person name="Panse V.G."/>
            <person name="Ramakrishnan V."/>
            <person name="Spahn C.M.T."/>
            <person name="Steitz T.A."/>
            <person name="Tchorzewski M."/>
            <person name="Tollervey D."/>
            <person name="Warren A.J."/>
            <person name="Williamson J.R."/>
            <person name="Wilson D."/>
            <person name="Yonath A."/>
            <person name="Yusupov M."/>
        </authorList>
    </citation>
    <scope>NOMENCLATURE</scope>
</reference>
<reference key="13">
    <citation type="journal article" date="2001" name="Cell">
        <title>Structure of the 80S ribosome from Saccharomyces cerevisiae -- tRNA-ribosome and subunit-subunit interactions.</title>
        <authorList>
            <person name="Spahn C.M.T."/>
            <person name="Beckmann R."/>
            <person name="Eswar N."/>
            <person name="Penczek P.A."/>
            <person name="Sali A."/>
            <person name="Blobel G."/>
            <person name="Frank J."/>
        </authorList>
    </citation>
    <scope>3D-STRUCTURE MODELING OF 102-220</scope>
    <scope>ELECTRON MICROSCOPY</scope>
</reference>
<reference key="14">
    <citation type="journal article" date="2004" name="EMBO J.">
        <title>Domain movements of elongation factor eEF2 and the eukaryotic 80S ribosome facilitate tRNA translocation.</title>
        <authorList>
            <person name="Spahn C.M.T."/>
            <person name="Gomez-Lorenzo M.G."/>
            <person name="Grassucci R.A."/>
            <person name="Joergensen R."/>
            <person name="Andersen G.R."/>
            <person name="Beckmann R."/>
            <person name="Penczek P.A."/>
            <person name="Ballesta J.P.G."/>
            <person name="Frank J."/>
        </authorList>
    </citation>
    <scope>3D-STRUCTURE MODELING OF 102-220</scope>
    <scope>ELECTRON MICROSCOPY</scope>
</reference>
<reference key="15">
    <citation type="journal article" date="2010" name="Science">
        <title>Crystal structure of the eukaryotic ribosome.</title>
        <authorList>
            <person name="Ben-Shem A."/>
            <person name="Jenner L."/>
            <person name="Yusupova G."/>
            <person name="Yusupov M."/>
        </authorList>
    </citation>
    <scope>X-RAY CRYSTALLOGRAPHY (4.0 ANGSTROMS) OF 80S RIBOSOME</scope>
</reference>
<reference key="16">
    <citation type="journal article" date="2011" name="Science">
        <title>The structure of the eukaryotic ribosome at 3.0 A resolution.</title>
        <authorList>
            <person name="Ben-Shem A."/>
            <person name="Garreau de Loubresse N."/>
            <person name="Melnikov S."/>
            <person name="Jenner L."/>
            <person name="Yusupova G."/>
            <person name="Yusupov M."/>
        </authorList>
    </citation>
    <scope>X-RAY CRYSTALLOGRAPHY (3.0 ANGSTROMS) OF 80S RIBOSOME</scope>
    <scope>SUBUNIT</scope>
    <scope>SUBCELLULAR LOCATION</scope>
</reference>
<feature type="initiator methionine" description="Removed" evidence="2 5">
    <location>
        <position position="1"/>
    </location>
</feature>
<feature type="chain" id="PRO_0000136760" description="Large ribosomal subunit protein eL8A">
    <location>
        <begin position="2"/>
        <end position="256"/>
    </location>
</feature>
<feature type="region of interest" description="Disordered" evidence="1">
    <location>
        <begin position="1"/>
        <end position="37"/>
    </location>
</feature>
<feature type="compositionally biased region" description="Polar residues" evidence="1">
    <location>
        <begin position="16"/>
        <end position="32"/>
    </location>
</feature>
<feature type="sequence conflict" description="In Ref. 2; CAA35073." evidence="9" ref="2">
    <original>A</original>
    <variation>R</variation>
    <location>
        <position position="113"/>
    </location>
</feature>
<feature type="helix" evidence="13">
    <location>
        <begin position="48"/>
        <end position="51"/>
    </location>
</feature>
<feature type="helix" evidence="13">
    <location>
        <begin position="54"/>
        <end position="68"/>
    </location>
</feature>
<feature type="strand" evidence="12">
    <location>
        <begin position="69"/>
        <end position="71"/>
    </location>
</feature>
<feature type="helix" evidence="13">
    <location>
        <begin position="73"/>
        <end position="76"/>
    </location>
</feature>
<feature type="helix" evidence="13">
    <location>
        <begin position="77"/>
        <end position="79"/>
    </location>
</feature>
<feature type="helix" evidence="13">
    <location>
        <begin position="84"/>
        <end position="94"/>
    </location>
</feature>
<feature type="helix" evidence="13">
    <location>
        <begin position="95"/>
        <end position="97"/>
    </location>
</feature>
<feature type="helix" evidence="13">
    <location>
        <begin position="102"/>
        <end position="118"/>
    </location>
</feature>
<feature type="helix" evidence="13">
    <location>
        <begin position="136"/>
        <end position="144"/>
    </location>
</feature>
<feature type="strand" evidence="13">
    <location>
        <begin position="149"/>
        <end position="155"/>
    </location>
</feature>
<feature type="helix" evidence="13">
    <location>
        <begin position="160"/>
        <end position="162"/>
    </location>
</feature>
<feature type="helix" evidence="13">
    <location>
        <begin position="165"/>
        <end position="172"/>
    </location>
</feature>
<feature type="strand" evidence="13">
    <location>
        <begin position="177"/>
        <end position="181"/>
    </location>
</feature>
<feature type="helix" evidence="13">
    <location>
        <begin position="183"/>
        <end position="188"/>
    </location>
</feature>
<feature type="turn" evidence="13">
    <location>
        <begin position="189"/>
        <end position="191"/>
    </location>
</feature>
<feature type="strand" evidence="13">
    <location>
        <begin position="196"/>
        <end position="200"/>
    </location>
</feature>
<feature type="helix" evidence="13">
    <location>
        <begin position="205"/>
        <end position="207"/>
    </location>
</feature>
<feature type="helix" evidence="13">
    <location>
        <begin position="208"/>
        <end position="221"/>
    </location>
</feature>
<feature type="helix" evidence="13">
    <location>
        <begin position="223"/>
        <end position="226"/>
    </location>
</feature>
<feature type="turn" evidence="13">
    <location>
        <begin position="227"/>
        <end position="231"/>
    </location>
</feature>
<feature type="helix" evidence="13">
    <location>
        <begin position="240"/>
        <end position="246"/>
    </location>
</feature>
<name>RL8A_YEAST</name>
<sequence>MAPGKKVAPAPFGAKSTKSNKTRNPLTHSTPKNFGIGQAVQPKRNLSRYVKWPEYVRVQRQKKILSIRLKVPPTIAQFQYTLDRNTAAETFKLFNKYRPETAAEKKERLTKEAAAVAEGKSKQDASPKPYAVKYGLNHVVALIENKKAKLVLIANDVDPIELVVFLPALCKKMGVPYAIVKGKARLGTLVNQKTSAVAALTEVRAEDEAALAKLVSTIDANFADKYDEVKKHWGGGILGNKAQAKMDKRAKNSDSA</sequence>
<gene>
    <name evidence="8" type="primary">RPL8A</name>
    <name type="synonym">MAK7</name>
    <name type="synonym">RPL4A</name>
    <name type="ordered locus">YHL033C</name>
</gene>
<comment type="function">
    <text evidence="10">Component of the ribosome, a large ribonucleoprotein complex responsible for the synthesis of proteins in the cell. The small ribosomal subunit (SSU) binds messenger RNAs (mRNAs) and translates the encoded message by selecting cognate aminoacyl-transfer RNA (tRNA) molecules. The large subunit (LSU) contains the ribosomal catalytic site termed the peptidyl transferase center (PTC), which catalyzes the formation of peptide bonds, thereby polymerizing the amino acids delivered by tRNAs into a polypeptide chain. The nascent polypeptides leave the ribosome through a tunnel in the LSU and interact with protein factors that function in enzymatic processing, targeting, and the membrane insertion of nascent chains at the exit of the ribosomal tunnel.</text>
</comment>
<comment type="subunit">
    <text evidence="6 11">Component of the large ribosomal subunit (LSU). Mature yeast ribosomes consist of a small (40S) and a large (60S) subunit. The 40S small subunit contains 1 molecule of ribosomal RNA (18S rRNA) and 33 different proteins (encoded by 57 genes). The large 60S subunit contains 3 rRNA molecules (25S, 5.8S and 5S rRNA) and 46 different proteins (encoded by 81 genes) (PubMed:22096102, PubMed:9559554).</text>
</comment>
<comment type="subcellular location">
    <subcellularLocation>
        <location evidence="3 6">Cytoplasm</location>
    </subcellularLocation>
</comment>
<comment type="miscellaneous">
    <text evidence="4">Present with 238000 molecules/cell in log phase SD medium.</text>
</comment>
<comment type="miscellaneous">
    <text evidence="9">There are 2 genes for eL8 in yeast.</text>
</comment>
<comment type="similarity">
    <text evidence="9">Belongs to the eukaryotic ribosomal protein eL8 family.</text>
</comment>
<proteinExistence type="evidence at protein level"/>
<accession>P17076</accession>
<accession>D3DKT5</accession>
<organism>
    <name type="scientific">Saccharomyces cerevisiae (strain ATCC 204508 / S288c)</name>
    <name type="common">Baker's yeast</name>
    <dbReference type="NCBI Taxonomy" id="559292"/>
    <lineage>
        <taxon>Eukaryota</taxon>
        <taxon>Fungi</taxon>
        <taxon>Dikarya</taxon>
        <taxon>Ascomycota</taxon>
        <taxon>Saccharomycotina</taxon>
        <taxon>Saccharomycetes</taxon>
        <taxon>Saccharomycetales</taxon>
        <taxon>Saccharomycetaceae</taxon>
        <taxon>Saccharomyces</taxon>
    </lineage>
</organism>
<protein>
    <recommendedName>
        <fullName evidence="7">Large ribosomal subunit protein eL8A</fullName>
    </recommendedName>
    <alternativeName>
        <fullName evidence="8">60S ribosomal protein L8-A</fullName>
    </alternativeName>
    <alternativeName>
        <fullName>L4</fullName>
    </alternativeName>
    <alternativeName>
        <fullName>L4-2</fullName>
    </alternativeName>
    <alternativeName>
        <fullName>L7a-1</fullName>
    </alternativeName>
    <alternativeName>
        <fullName>Maintenance of killer protein 7</fullName>
    </alternativeName>
    <alternativeName>
        <fullName>RP6</fullName>
    </alternativeName>
    <alternativeName>
        <fullName>YL5</fullName>
    </alternativeName>
</protein>
<evidence type="ECO:0000256" key="1">
    <source>
        <dbReference type="SAM" id="MobiDB-lite"/>
    </source>
</evidence>
<evidence type="ECO:0000269" key="2">
    <source>
    </source>
</evidence>
<evidence type="ECO:0000269" key="3">
    <source>
    </source>
</evidence>
<evidence type="ECO:0000269" key="4">
    <source>
    </source>
</evidence>
<evidence type="ECO:0000269" key="5">
    <source>
    </source>
</evidence>
<evidence type="ECO:0000269" key="6">
    <source>
    </source>
</evidence>
<evidence type="ECO:0000303" key="7">
    <source>
    </source>
</evidence>
<evidence type="ECO:0000303" key="8">
    <source>
    </source>
</evidence>
<evidence type="ECO:0000305" key="9"/>
<evidence type="ECO:0000305" key="10">
    <source>
    </source>
</evidence>
<evidence type="ECO:0000305" key="11">
    <source>
    </source>
</evidence>
<evidence type="ECO:0007829" key="12">
    <source>
        <dbReference type="PDB" id="7R6K"/>
    </source>
</evidence>
<evidence type="ECO:0007829" key="13">
    <source>
        <dbReference type="PDB" id="7R6Q"/>
    </source>
</evidence>